<gene>
    <name evidence="1" type="primary">rpsU1</name>
    <name type="ordered locus">FTL_0456</name>
</gene>
<organism>
    <name type="scientific">Francisella tularensis subsp. holarctica (strain LVS)</name>
    <dbReference type="NCBI Taxonomy" id="376619"/>
    <lineage>
        <taxon>Bacteria</taxon>
        <taxon>Pseudomonadati</taxon>
        <taxon>Pseudomonadota</taxon>
        <taxon>Gammaproteobacteria</taxon>
        <taxon>Thiotrichales</taxon>
        <taxon>Francisellaceae</taxon>
        <taxon>Francisella</taxon>
    </lineage>
</organism>
<name>RS211_FRATH</name>
<proteinExistence type="inferred from homology"/>
<feature type="chain" id="PRO_0000266668" description="Small ribosomal subunit protein bS21A">
    <location>
        <begin position="1"/>
        <end position="65"/>
    </location>
</feature>
<sequence>MLSIRVDEHKPFDISLRNFKRACEKAGIKQELRDRQHYVKPTEKRKIAKRQAVKRARISQRRAFI</sequence>
<evidence type="ECO:0000255" key="1">
    <source>
        <dbReference type="HAMAP-Rule" id="MF_00358"/>
    </source>
</evidence>
<evidence type="ECO:0000305" key="2"/>
<reference key="1">
    <citation type="submission" date="2006-03" db="EMBL/GenBank/DDBJ databases">
        <title>Complete genome sequence of Francisella tularensis LVS (Live Vaccine Strain).</title>
        <authorList>
            <person name="Chain P."/>
            <person name="Larimer F."/>
            <person name="Land M."/>
            <person name="Stilwagen S."/>
            <person name="Larsson P."/>
            <person name="Bearden S."/>
            <person name="Chu M."/>
            <person name="Oyston P."/>
            <person name="Forsman M."/>
            <person name="Andersson S."/>
            <person name="Lindler L."/>
            <person name="Titball R."/>
            <person name="Garcia E."/>
        </authorList>
    </citation>
    <scope>NUCLEOTIDE SEQUENCE [LARGE SCALE GENOMIC DNA]</scope>
    <source>
        <strain>LVS</strain>
    </source>
</reference>
<comment type="similarity">
    <text evidence="1">Belongs to the bacterial ribosomal protein bS21 family.</text>
</comment>
<accession>Q2A4X4</accession>
<dbReference type="EMBL" id="AM233362">
    <property type="protein sequence ID" value="CAJ78896.1"/>
    <property type="molecule type" value="Genomic_DNA"/>
</dbReference>
<dbReference type="SMR" id="Q2A4X4"/>
<dbReference type="KEGG" id="ftl:FTL_0456"/>
<dbReference type="Proteomes" id="UP000001944">
    <property type="component" value="Chromosome"/>
</dbReference>
<dbReference type="GO" id="GO:1990904">
    <property type="term" value="C:ribonucleoprotein complex"/>
    <property type="evidence" value="ECO:0007669"/>
    <property type="project" value="UniProtKB-KW"/>
</dbReference>
<dbReference type="GO" id="GO:0005840">
    <property type="term" value="C:ribosome"/>
    <property type="evidence" value="ECO:0007669"/>
    <property type="project" value="UniProtKB-KW"/>
</dbReference>
<dbReference type="GO" id="GO:0003735">
    <property type="term" value="F:structural constituent of ribosome"/>
    <property type="evidence" value="ECO:0007669"/>
    <property type="project" value="InterPro"/>
</dbReference>
<dbReference type="GO" id="GO:0006412">
    <property type="term" value="P:translation"/>
    <property type="evidence" value="ECO:0007669"/>
    <property type="project" value="UniProtKB-UniRule"/>
</dbReference>
<dbReference type="Gene3D" id="1.20.5.1150">
    <property type="entry name" value="Ribosomal protein S8"/>
    <property type="match status" value="1"/>
</dbReference>
<dbReference type="HAMAP" id="MF_00358">
    <property type="entry name" value="Ribosomal_bS21"/>
    <property type="match status" value="1"/>
</dbReference>
<dbReference type="InterPro" id="IPR001911">
    <property type="entry name" value="Ribosomal_bS21"/>
</dbReference>
<dbReference type="InterPro" id="IPR038380">
    <property type="entry name" value="Ribosomal_bS21_sf"/>
</dbReference>
<dbReference type="NCBIfam" id="TIGR00030">
    <property type="entry name" value="S21p"/>
    <property type="match status" value="1"/>
</dbReference>
<dbReference type="Pfam" id="PF01165">
    <property type="entry name" value="Ribosomal_S21"/>
    <property type="match status" value="1"/>
</dbReference>
<dbReference type="PRINTS" id="PR00976">
    <property type="entry name" value="RIBOSOMALS21"/>
</dbReference>
<protein>
    <recommendedName>
        <fullName evidence="1">Small ribosomal subunit protein bS21A</fullName>
    </recommendedName>
    <alternativeName>
        <fullName evidence="2">30S ribosomal protein S21 1</fullName>
    </alternativeName>
</protein>
<keyword id="KW-1185">Reference proteome</keyword>
<keyword id="KW-0687">Ribonucleoprotein</keyword>
<keyword id="KW-0689">Ribosomal protein</keyword>